<keyword id="KW-0963">Cytoplasm</keyword>
<keyword id="KW-0690">Ribosome biogenesis</keyword>
<organism>
    <name type="scientific">Anaeromyxobacter sp. (strain K)</name>
    <dbReference type="NCBI Taxonomy" id="447217"/>
    <lineage>
        <taxon>Bacteria</taxon>
        <taxon>Pseudomonadati</taxon>
        <taxon>Myxococcota</taxon>
        <taxon>Myxococcia</taxon>
        <taxon>Myxococcales</taxon>
        <taxon>Cystobacterineae</taxon>
        <taxon>Anaeromyxobacteraceae</taxon>
        <taxon>Anaeromyxobacter</taxon>
    </lineage>
</organism>
<protein>
    <recommendedName>
        <fullName evidence="1">Ribosome-binding factor A</fullName>
    </recommendedName>
</protein>
<comment type="function">
    <text evidence="1">One of several proteins that assist in the late maturation steps of the functional core of the 30S ribosomal subunit. Associates with free 30S ribosomal subunits (but not with 30S subunits that are part of 70S ribosomes or polysomes). Required for efficient processing of 16S rRNA. May interact with the 5'-terminal helix region of 16S rRNA.</text>
</comment>
<comment type="subunit">
    <text evidence="1">Monomer. Binds 30S ribosomal subunits, but not 50S ribosomal subunits or 70S ribosomes.</text>
</comment>
<comment type="subcellular location">
    <subcellularLocation>
        <location evidence="1">Cytoplasm</location>
    </subcellularLocation>
</comment>
<comment type="similarity">
    <text evidence="1">Belongs to the RbfA family.</text>
</comment>
<evidence type="ECO:0000255" key="1">
    <source>
        <dbReference type="HAMAP-Rule" id="MF_00003"/>
    </source>
</evidence>
<evidence type="ECO:0000256" key="2">
    <source>
        <dbReference type="SAM" id="MobiDB-lite"/>
    </source>
</evidence>
<name>RBFA_ANASK</name>
<accession>B4UHG2</accession>
<dbReference type="EMBL" id="CP001131">
    <property type="protein sequence ID" value="ACG72397.1"/>
    <property type="molecule type" value="Genomic_DNA"/>
</dbReference>
<dbReference type="RefSeq" id="WP_012525223.1">
    <property type="nucleotide sequence ID" value="NC_011145.1"/>
</dbReference>
<dbReference type="SMR" id="B4UHG2"/>
<dbReference type="KEGG" id="ank:AnaeK_1164"/>
<dbReference type="HOGENOM" id="CLU_089475_6_3_7"/>
<dbReference type="OrthoDB" id="307788at2"/>
<dbReference type="Proteomes" id="UP000001871">
    <property type="component" value="Chromosome"/>
</dbReference>
<dbReference type="GO" id="GO:0005829">
    <property type="term" value="C:cytosol"/>
    <property type="evidence" value="ECO:0007669"/>
    <property type="project" value="TreeGrafter"/>
</dbReference>
<dbReference type="GO" id="GO:0043024">
    <property type="term" value="F:ribosomal small subunit binding"/>
    <property type="evidence" value="ECO:0007669"/>
    <property type="project" value="TreeGrafter"/>
</dbReference>
<dbReference type="GO" id="GO:0030490">
    <property type="term" value="P:maturation of SSU-rRNA"/>
    <property type="evidence" value="ECO:0007669"/>
    <property type="project" value="UniProtKB-UniRule"/>
</dbReference>
<dbReference type="Gene3D" id="3.30.300.20">
    <property type="match status" value="1"/>
</dbReference>
<dbReference type="HAMAP" id="MF_00003">
    <property type="entry name" value="RbfA"/>
    <property type="match status" value="1"/>
</dbReference>
<dbReference type="InterPro" id="IPR015946">
    <property type="entry name" value="KH_dom-like_a/b"/>
</dbReference>
<dbReference type="InterPro" id="IPR000238">
    <property type="entry name" value="RbfA"/>
</dbReference>
<dbReference type="InterPro" id="IPR023799">
    <property type="entry name" value="RbfA_dom_sf"/>
</dbReference>
<dbReference type="InterPro" id="IPR020053">
    <property type="entry name" value="Ribosome-bd_factorA_CS"/>
</dbReference>
<dbReference type="NCBIfam" id="TIGR00082">
    <property type="entry name" value="rbfA"/>
    <property type="match status" value="1"/>
</dbReference>
<dbReference type="PANTHER" id="PTHR33515">
    <property type="entry name" value="RIBOSOME-BINDING FACTOR A, CHLOROPLASTIC-RELATED"/>
    <property type="match status" value="1"/>
</dbReference>
<dbReference type="PANTHER" id="PTHR33515:SF1">
    <property type="entry name" value="RIBOSOME-BINDING FACTOR A, CHLOROPLASTIC-RELATED"/>
    <property type="match status" value="1"/>
</dbReference>
<dbReference type="Pfam" id="PF02033">
    <property type="entry name" value="RBFA"/>
    <property type="match status" value="1"/>
</dbReference>
<dbReference type="SUPFAM" id="SSF89919">
    <property type="entry name" value="Ribosome-binding factor A, RbfA"/>
    <property type="match status" value="1"/>
</dbReference>
<dbReference type="PROSITE" id="PS01319">
    <property type="entry name" value="RBFA"/>
    <property type="match status" value="1"/>
</dbReference>
<sequence>MTTHNRPARVAEEFRHELSAILARGLKDPRITGFVTVTGSKMSPDLKEATVYVSIHGDERVRKDTFAGLQAAAGFLQREVSRALRLRNTPHLRFVYDESVARGDRIERLLREARTQGQAPAADVEPAPGAAPDDEAEE</sequence>
<reference key="1">
    <citation type="submission" date="2008-08" db="EMBL/GenBank/DDBJ databases">
        <title>Complete sequence of Anaeromyxobacter sp. K.</title>
        <authorList>
            <consortium name="US DOE Joint Genome Institute"/>
            <person name="Lucas S."/>
            <person name="Copeland A."/>
            <person name="Lapidus A."/>
            <person name="Glavina del Rio T."/>
            <person name="Dalin E."/>
            <person name="Tice H."/>
            <person name="Bruce D."/>
            <person name="Goodwin L."/>
            <person name="Pitluck S."/>
            <person name="Saunders E."/>
            <person name="Brettin T."/>
            <person name="Detter J.C."/>
            <person name="Han C."/>
            <person name="Larimer F."/>
            <person name="Land M."/>
            <person name="Hauser L."/>
            <person name="Kyrpides N."/>
            <person name="Ovchinnikiva G."/>
            <person name="Beliaev A."/>
        </authorList>
    </citation>
    <scope>NUCLEOTIDE SEQUENCE [LARGE SCALE GENOMIC DNA]</scope>
    <source>
        <strain>K</strain>
    </source>
</reference>
<feature type="chain" id="PRO_1000088856" description="Ribosome-binding factor A">
    <location>
        <begin position="1"/>
        <end position="138"/>
    </location>
</feature>
<feature type="region of interest" description="Disordered" evidence="2">
    <location>
        <begin position="112"/>
        <end position="138"/>
    </location>
</feature>
<feature type="compositionally biased region" description="Low complexity" evidence="2">
    <location>
        <begin position="119"/>
        <end position="131"/>
    </location>
</feature>
<gene>
    <name evidence="1" type="primary">rbfA</name>
    <name type="ordered locus">AnaeK_1164</name>
</gene>
<proteinExistence type="inferred from homology"/>